<reference key="1">
    <citation type="journal article" date="2005" name="BMC Genomics">
        <title>Characterization of 954 bovine full-CDS cDNA sequences.</title>
        <authorList>
            <person name="Harhay G.P."/>
            <person name="Sonstegard T.S."/>
            <person name="Keele J.W."/>
            <person name="Heaton M.P."/>
            <person name="Clawson M.L."/>
            <person name="Snelling W.M."/>
            <person name="Wiedmann R.T."/>
            <person name="Van Tassell C.P."/>
            <person name="Smith T.P.L."/>
        </authorList>
    </citation>
    <scope>NUCLEOTIDE SEQUENCE [LARGE SCALE MRNA]</scope>
</reference>
<reference key="2">
    <citation type="submission" date="2007-07" db="EMBL/GenBank/DDBJ databases">
        <authorList>
            <consortium name="NIH - Mammalian Gene Collection (MGC) project"/>
        </authorList>
    </citation>
    <scope>NUCLEOTIDE SEQUENCE [LARGE SCALE MRNA]</scope>
    <source>
        <strain>Hereford</strain>
        <tissue>Fetal skin</tissue>
    </source>
</reference>
<name>S61A1_BOVIN</name>
<evidence type="ECO:0000250" key="1">
    <source>
        <dbReference type="UniProtKB" id="P38377"/>
    </source>
</evidence>
<evidence type="ECO:0000250" key="2">
    <source>
        <dbReference type="UniProtKB" id="P61619"/>
    </source>
</evidence>
<evidence type="ECO:0000250" key="3">
    <source>
        <dbReference type="UniProtKB" id="P61620"/>
    </source>
</evidence>
<evidence type="ECO:0000255" key="4"/>
<evidence type="ECO:0000305" key="5"/>
<proteinExistence type="evidence at transcript level"/>
<sequence length="476" mass="52225">MGIKFLEVIKPFCVILPEIQKPERKIQFKEKVLWTAITLFIFLVCCQIPLFGIMSSDSADPFYWMRVILASNRGTLMELGISPIVTSGLIMQLLAGAKIIEVGDTPKDRALFNGAQKLFGMTITIGQSIVYVMTGMYGDPSEMGAGVCLLITIQLFVAGLIVLLLDELLQKGYGLGSGISLFIATNICETIVWKAFSPTTVNTGRGMEFEGAIIALFHLLATRTDKVRALREAFYRQNLPNLMNLIATIFVFAVVIYFQGFRVDLPIKSARYRGQYNTYPIKLFYTSNIPIILQSALVSNLYVISQMLSARFSGNLLVSLLGTWSDTSSGGPARAYPVGGLCYYLSPPESFGSVLEDPVHAVVYIVFMLGSCAFFSKTWIEVSGSSAKDVAKQLKEQQMVMRGHRETSMVHELNRYIPTAAAFGGLCIGALSVLADFLGAIGSGTGILLAVTIIYQYFEIFVKEQSEVGSMGALLF</sequence>
<comment type="function">
    <text evidence="2 3">Component of SEC61 channel-forming translocon complex that mediates transport of signal peptide-containing precursor polypeptides across the endoplasmic reticulum (ER). Forms a ribosome receptor and a gated pore in the ER membrane, both functions required for cotranslational translocation of nascent polypeptides. May cooperate with auxiliary protein SEC62, SEC63 and HSPA5/BiP to enable post-translational transport of small presecretory proteins. The SEC61 channel is also involved in ER membrane insertion of transmembrane proteins: it mediates membrane insertion of the first few transmembrane segments of proteins, while insertion of subsequent transmembrane regions of multi-pass membrane proteins is mediated by the multi-pass translocon (MPT) complex. The SEC61 channel cooperates with the translocating protein TRAM1 to import nascent proteins into the ER. Controls the passive efflux of calcium ions from the ER lumen to the cytosol through SEC61 channel, contributing to the maintenance of cellular calcium homeostasis (By similarity). Plays a critical role in nephrogenesis, specifically at pronephros stage (By similarity).</text>
</comment>
<comment type="subunit">
    <text evidence="1 2">The SEC61 channel-forming translocon complex consists of channel-forming core components SEC61A1, SEC61B and SEC61G and different auxiliary components such as SEC62 and SEC63 (By similarity). The SEC61 channel associates with the multi-pass translocon (MPT) complex (By similarity).</text>
</comment>
<comment type="subcellular location">
    <subcellularLocation>
        <location evidence="2">Endoplasmic reticulum membrane</location>
        <topology evidence="5">Multi-pass membrane protein</topology>
    </subcellularLocation>
    <text evidence="2">Localizes exclusively in granular structures in the endoplasmic reticulum (ER).</text>
</comment>
<comment type="similarity">
    <text evidence="5">Belongs to the SecY/SEC61-alpha family.</text>
</comment>
<dbReference type="EMBL" id="BT020701">
    <property type="protein sequence ID" value="AAX08718.1"/>
    <property type="molecule type" value="mRNA"/>
</dbReference>
<dbReference type="EMBL" id="BC151365">
    <property type="protein sequence ID" value="AAI51366.1"/>
    <property type="molecule type" value="mRNA"/>
</dbReference>
<dbReference type="RefSeq" id="NP_001035594.1">
    <property type="nucleotide sequence ID" value="NM_001040504.1"/>
</dbReference>
<dbReference type="SMR" id="Q5EA68"/>
<dbReference type="BioGRID" id="161713">
    <property type="interactions" value="2"/>
</dbReference>
<dbReference type="CORUM" id="Q5EA68"/>
<dbReference type="FunCoup" id="Q5EA68">
    <property type="interactions" value="3010"/>
</dbReference>
<dbReference type="STRING" id="9913.ENSBTAP00000006494"/>
<dbReference type="PaxDb" id="9913-ENSBTAP00000006494"/>
<dbReference type="PeptideAtlas" id="Q5EA68"/>
<dbReference type="Ensembl" id="ENSBTAT00000006494.7">
    <property type="protein sequence ID" value="ENSBTAP00000006494.7"/>
    <property type="gene ID" value="ENSBTAG00000004937.7"/>
</dbReference>
<dbReference type="GeneID" id="505064"/>
<dbReference type="KEGG" id="bta:505064"/>
<dbReference type="CTD" id="29927"/>
<dbReference type="VEuPathDB" id="HostDB:ENSBTAG00000004937"/>
<dbReference type="VGNC" id="VGNC:49153">
    <property type="gene designation" value="SEC61A1"/>
</dbReference>
<dbReference type="eggNOG" id="KOG1373">
    <property type="taxonomic scope" value="Eukaryota"/>
</dbReference>
<dbReference type="GeneTree" id="ENSGT00390000003721"/>
<dbReference type="HOGENOM" id="CLU_031763_2_0_1"/>
<dbReference type="InParanoid" id="Q5EA68"/>
<dbReference type="OMA" id="PMMRQMF"/>
<dbReference type="OrthoDB" id="420669at2759"/>
<dbReference type="TreeFam" id="TF300348"/>
<dbReference type="Proteomes" id="UP000009136">
    <property type="component" value="Chromosome 22"/>
</dbReference>
<dbReference type="Bgee" id="ENSBTAG00000004937">
    <property type="expression patterns" value="Expressed in saliva-secreting gland and 106 other cell types or tissues"/>
</dbReference>
<dbReference type="GO" id="GO:0005789">
    <property type="term" value="C:endoplasmic reticulum membrane"/>
    <property type="evidence" value="ECO:0000250"/>
    <property type="project" value="UniProtKB"/>
</dbReference>
<dbReference type="GO" id="GO:0005784">
    <property type="term" value="C:Sec61 translocon complex"/>
    <property type="evidence" value="ECO:0000318"/>
    <property type="project" value="GO_Central"/>
</dbReference>
<dbReference type="GO" id="GO:0008320">
    <property type="term" value="F:protein transmembrane transporter activity"/>
    <property type="evidence" value="ECO:0000318"/>
    <property type="project" value="GO_Central"/>
</dbReference>
<dbReference type="GO" id="GO:0043022">
    <property type="term" value="F:ribosome binding"/>
    <property type="evidence" value="ECO:0000250"/>
    <property type="project" value="UniProtKB"/>
</dbReference>
<dbReference type="GO" id="GO:0005048">
    <property type="term" value="F:signal sequence binding"/>
    <property type="evidence" value="ECO:0000318"/>
    <property type="project" value="GO_Central"/>
</dbReference>
<dbReference type="GO" id="GO:0006613">
    <property type="term" value="P:cotranslational protein targeting to membrane"/>
    <property type="evidence" value="ECO:0000250"/>
    <property type="project" value="UniProtKB"/>
</dbReference>
<dbReference type="GO" id="GO:0031204">
    <property type="term" value="P:post-translational protein targeting to membrane, translocation"/>
    <property type="evidence" value="ECO:0000250"/>
    <property type="project" value="UniProtKB"/>
</dbReference>
<dbReference type="GO" id="GO:0039019">
    <property type="term" value="P:pronephric nephron development"/>
    <property type="evidence" value="ECO:0000250"/>
    <property type="project" value="UniProtKB"/>
</dbReference>
<dbReference type="GO" id="GO:0045048">
    <property type="term" value="P:protein insertion into ER membrane"/>
    <property type="evidence" value="ECO:0000250"/>
    <property type="project" value="UniProtKB"/>
</dbReference>
<dbReference type="GO" id="GO:0045047">
    <property type="term" value="P:protein targeting to ER"/>
    <property type="evidence" value="ECO:0000250"/>
    <property type="project" value="UniProtKB"/>
</dbReference>
<dbReference type="GO" id="GO:0006616">
    <property type="term" value="P:SRP-dependent cotranslational protein targeting to membrane, translocation"/>
    <property type="evidence" value="ECO:0000318"/>
    <property type="project" value="GO_Central"/>
</dbReference>
<dbReference type="FunFam" id="1.10.3370.10:FF:000002">
    <property type="entry name" value="Transport Sec61 subunit alpha isoform 2"/>
    <property type="match status" value="1"/>
</dbReference>
<dbReference type="Gene3D" id="1.10.3370.10">
    <property type="entry name" value="SecY subunit domain"/>
    <property type="match status" value="1"/>
</dbReference>
<dbReference type="InterPro" id="IPR002208">
    <property type="entry name" value="SecY/SEC61-alpha"/>
</dbReference>
<dbReference type="InterPro" id="IPR030659">
    <property type="entry name" value="SecY_CS"/>
</dbReference>
<dbReference type="InterPro" id="IPR023201">
    <property type="entry name" value="SecY_dom_sf"/>
</dbReference>
<dbReference type="InterPro" id="IPR019561">
    <property type="entry name" value="Translocon_Sec61/SecY_plug_dom"/>
</dbReference>
<dbReference type="NCBIfam" id="TIGR00967">
    <property type="entry name" value="3a0501s007"/>
    <property type="match status" value="1"/>
</dbReference>
<dbReference type="NCBIfam" id="NF006341">
    <property type="entry name" value="PRK08568.1-5"/>
    <property type="match status" value="1"/>
</dbReference>
<dbReference type="PANTHER" id="PTHR10906">
    <property type="entry name" value="SECY/SEC61-ALPHA FAMILY MEMBER"/>
    <property type="match status" value="1"/>
</dbReference>
<dbReference type="Pfam" id="PF10559">
    <property type="entry name" value="Plug_translocon"/>
    <property type="match status" value="1"/>
</dbReference>
<dbReference type="Pfam" id="PF00344">
    <property type="entry name" value="SecY"/>
    <property type="match status" value="1"/>
</dbReference>
<dbReference type="PIRSF" id="PIRSF004557">
    <property type="entry name" value="SecY"/>
    <property type="match status" value="1"/>
</dbReference>
<dbReference type="SUPFAM" id="SSF103491">
    <property type="entry name" value="Preprotein translocase SecY subunit"/>
    <property type="match status" value="1"/>
</dbReference>
<dbReference type="PROSITE" id="PS00755">
    <property type="entry name" value="SECY_1"/>
    <property type="match status" value="1"/>
</dbReference>
<dbReference type="PROSITE" id="PS00756">
    <property type="entry name" value="SECY_2"/>
    <property type="match status" value="1"/>
</dbReference>
<accession>Q5EA68</accession>
<accession>A9JSM4</accession>
<gene>
    <name type="primary">SEC61A1</name>
</gene>
<keyword id="KW-0217">Developmental protein</keyword>
<keyword id="KW-0256">Endoplasmic reticulum</keyword>
<keyword id="KW-0472">Membrane</keyword>
<keyword id="KW-0653">Protein transport</keyword>
<keyword id="KW-1185">Reference proteome</keyword>
<keyword id="KW-0811">Translocation</keyword>
<keyword id="KW-0812">Transmembrane</keyword>
<keyword id="KW-1133">Transmembrane helix</keyword>
<keyword id="KW-0813">Transport</keyword>
<feature type="chain" id="PRO_0000239119" description="Protein transport protein Sec61 subunit alpha isoform 1">
    <location>
        <begin position="1"/>
        <end position="476"/>
    </location>
</feature>
<feature type="topological domain" description="Cytoplasmic" evidence="4">
    <location>
        <begin position="1"/>
        <end position="33"/>
    </location>
</feature>
<feature type="transmembrane region" description="Helical" evidence="4">
    <location>
        <begin position="34"/>
        <end position="53"/>
    </location>
</feature>
<feature type="topological domain" description="Lumenal" evidence="4">
    <location>
        <begin position="54"/>
        <end position="76"/>
    </location>
</feature>
<feature type="transmembrane region" description="Helical" evidence="4">
    <location>
        <begin position="77"/>
        <end position="96"/>
    </location>
</feature>
<feature type="topological domain" description="Cytoplasmic" evidence="4">
    <location>
        <begin position="97"/>
        <end position="117"/>
    </location>
</feature>
<feature type="transmembrane region" description="Helical" evidence="4">
    <location>
        <begin position="118"/>
        <end position="138"/>
    </location>
</feature>
<feature type="topological domain" description="Lumenal" evidence="4">
    <location>
        <begin position="139"/>
        <end position="144"/>
    </location>
</feature>
<feature type="transmembrane region" description="Helical" evidence="4">
    <location>
        <begin position="145"/>
        <end position="165"/>
    </location>
</feature>
<feature type="topological domain" description="Cytoplasmic" evidence="4">
    <location>
        <begin position="166"/>
        <end position="172"/>
    </location>
</feature>
<feature type="transmembrane region" description="Helical" evidence="4">
    <location>
        <begin position="173"/>
        <end position="193"/>
    </location>
</feature>
<feature type="topological domain" description="Lumenal" evidence="4">
    <location>
        <begin position="194"/>
        <end position="240"/>
    </location>
</feature>
<feature type="transmembrane region" description="Helical" evidence="4">
    <location>
        <begin position="241"/>
        <end position="261"/>
    </location>
</feature>
<feature type="topological domain" description="Cytoplasmic" evidence="4">
    <location>
        <begin position="262"/>
        <end position="288"/>
    </location>
</feature>
<feature type="transmembrane region" description="Helical" evidence="4">
    <location>
        <begin position="289"/>
        <end position="309"/>
    </location>
</feature>
<feature type="topological domain" description="Lumenal" evidence="4">
    <location>
        <begin position="310"/>
        <end position="354"/>
    </location>
</feature>
<feature type="transmembrane region" description="Helical" evidence="4">
    <location>
        <begin position="355"/>
        <end position="375"/>
    </location>
</feature>
<feature type="topological domain" description="Cytoplasmic" evidence="4">
    <location>
        <begin position="376"/>
        <end position="420"/>
    </location>
</feature>
<feature type="transmembrane region" description="Helical" evidence="4">
    <location>
        <begin position="421"/>
        <end position="441"/>
    </location>
</feature>
<feature type="topological domain" description="Lumenal" evidence="4">
    <location>
        <begin position="442"/>
        <end position="445"/>
    </location>
</feature>
<feature type="transmembrane region" description="Helical" evidence="4">
    <location>
        <begin position="446"/>
        <end position="462"/>
    </location>
</feature>
<feature type="topological domain" description="Cytoplasmic" evidence="4">
    <location>
        <begin position="463"/>
        <end position="476"/>
    </location>
</feature>
<protein>
    <recommendedName>
        <fullName>Protein transport protein Sec61 subunit alpha isoform 1</fullName>
        <shortName>Sec61 alpha-1</shortName>
    </recommendedName>
</protein>
<organism>
    <name type="scientific">Bos taurus</name>
    <name type="common">Bovine</name>
    <dbReference type="NCBI Taxonomy" id="9913"/>
    <lineage>
        <taxon>Eukaryota</taxon>
        <taxon>Metazoa</taxon>
        <taxon>Chordata</taxon>
        <taxon>Craniata</taxon>
        <taxon>Vertebrata</taxon>
        <taxon>Euteleostomi</taxon>
        <taxon>Mammalia</taxon>
        <taxon>Eutheria</taxon>
        <taxon>Laurasiatheria</taxon>
        <taxon>Artiodactyla</taxon>
        <taxon>Ruminantia</taxon>
        <taxon>Pecora</taxon>
        <taxon>Bovidae</taxon>
        <taxon>Bovinae</taxon>
        <taxon>Bos</taxon>
    </lineage>
</organism>